<dbReference type="EC" id="2.3.1.40" evidence="1"/>
<dbReference type="EC" id="6.2.1.20" evidence="1"/>
<dbReference type="EMBL" id="AE014075">
    <property type="protein sequence ID" value="AAN81876.1"/>
    <property type="molecule type" value="Genomic_DNA"/>
</dbReference>
<dbReference type="RefSeq" id="WP_000899022.1">
    <property type="nucleotide sequence ID" value="NZ_CP051263.1"/>
</dbReference>
<dbReference type="SMR" id="Q8FEA6"/>
<dbReference type="STRING" id="199310.c3431"/>
<dbReference type="KEGG" id="ecc:c3431"/>
<dbReference type="eggNOG" id="COG0204">
    <property type="taxonomic scope" value="Bacteria"/>
</dbReference>
<dbReference type="eggNOG" id="COG0318">
    <property type="taxonomic scope" value="Bacteria"/>
</dbReference>
<dbReference type="HOGENOM" id="CLU_000022_59_8_6"/>
<dbReference type="BioCyc" id="ECOL199310:C3431-MONOMER"/>
<dbReference type="Proteomes" id="UP000001410">
    <property type="component" value="Chromosome"/>
</dbReference>
<dbReference type="GO" id="GO:0005886">
    <property type="term" value="C:plasma membrane"/>
    <property type="evidence" value="ECO:0007669"/>
    <property type="project" value="UniProtKB-SubCell"/>
</dbReference>
<dbReference type="GO" id="GO:0008779">
    <property type="term" value="F:acyl-[acyl-carrier-protein]-phospholipid O-acyltransferase activity"/>
    <property type="evidence" value="ECO:0007669"/>
    <property type="project" value="UniProtKB-UniRule"/>
</dbReference>
<dbReference type="GO" id="GO:0005524">
    <property type="term" value="F:ATP binding"/>
    <property type="evidence" value="ECO:0007669"/>
    <property type="project" value="UniProtKB-KW"/>
</dbReference>
<dbReference type="GO" id="GO:0008922">
    <property type="term" value="F:long-chain fatty acid [acyl-carrier-protein] ligase activity"/>
    <property type="evidence" value="ECO:0007669"/>
    <property type="project" value="UniProtKB-UniRule"/>
</dbReference>
<dbReference type="GO" id="GO:0031956">
    <property type="term" value="F:medium-chain fatty acid-CoA ligase activity"/>
    <property type="evidence" value="ECO:0007669"/>
    <property type="project" value="TreeGrafter"/>
</dbReference>
<dbReference type="GO" id="GO:0006631">
    <property type="term" value="P:fatty acid metabolic process"/>
    <property type="evidence" value="ECO:0007669"/>
    <property type="project" value="InterPro"/>
</dbReference>
<dbReference type="GO" id="GO:0008654">
    <property type="term" value="P:phospholipid biosynthetic process"/>
    <property type="evidence" value="ECO:0007669"/>
    <property type="project" value="InterPro"/>
</dbReference>
<dbReference type="CDD" id="cd05909">
    <property type="entry name" value="AAS_C"/>
    <property type="match status" value="1"/>
</dbReference>
<dbReference type="CDD" id="cd07989">
    <property type="entry name" value="LPLAT_AGPAT-like"/>
    <property type="match status" value="1"/>
</dbReference>
<dbReference type="FunFam" id="3.30.300.30:FF:000009">
    <property type="entry name" value="Bifunctional protein Aas"/>
    <property type="match status" value="1"/>
</dbReference>
<dbReference type="FunFam" id="3.40.50.12780:FF:000009">
    <property type="entry name" value="Bifunctional protein Aas"/>
    <property type="match status" value="1"/>
</dbReference>
<dbReference type="Gene3D" id="3.30.300.30">
    <property type="match status" value="1"/>
</dbReference>
<dbReference type="Gene3D" id="3.40.50.12780">
    <property type="entry name" value="N-terminal domain of ligase-like"/>
    <property type="match status" value="1"/>
</dbReference>
<dbReference type="HAMAP" id="MF_01162">
    <property type="entry name" value="Aas"/>
    <property type="match status" value="1"/>
</dbReference>
<dbReference type="InterPro" id="IPR023775">
    <property type="entry name" value="Aas"/>
</dbReference>
<dbReference type="InterPro" id="IPR045851">
    <property type="entry name" value="AMP-bd_C_sf"/>
</dbReference>
<dbReference type="InterPro" id="IPR020845">
    <property type="entry name" value="AMP-binding_CS"/>
</dbReference>
<dbReference type="InterPro" id="IPR000873">
    <property type="entry name" value="AMP-dep_synth/lig_dom"/>
</dbReference>
<dbReference type="InterPro" id="IPR042099">
    <property type="entry name" value="ANL_N_sf"/>
</dbReference>
<dbReference type="InterPro" id="IPR002123">
    <property type="entry name" value="Plipid/glycerol_acylTrfase"/>
</dbReference>
<dbReference type="NCBIfam" id="NF005959">
    <property type="entry name" value="PRK08043.1"/>
    <property type="match status" value="1"/>
</dbReference>
<dbReference type="PANTHER" id="PTHR43201">
    <property type="entry name" value="ACYL-COA SYNTHETASE"/>
    <property type="match status" value="1"/>
</dbReference>
<dbReference type="PANTHER" id="PTHR43201:SF8">
    <property type="entry name" value="ACYL-COA SYNTHETASE FAMILY MEMBER 3"/>
    <property type="match status" value="1"/>
</dbReference>
<dbReference type="Pfam" id="PF01553">
    <property type="entry name" value="Acyltransferase"/>
    <property type="match status" value="1"/>
</dbReference>
<dbReference type="Pfam" id="PF00501">
    <property type="entry name" value="AMP-binding"/>
    <property type="match status" value="1"/>
</dbReference>
<dbReference type="SMART" id="SM00563">
    <property type="entry name" value="PlsC"/>
    <property type="match status" value="1"/>
</dbReference>
<dbReference type="SUPFAM" id="SSF56801">
    <property type="entry name" value="Acetyl-CoA synthetase-like"/>
    <property type="match status" value="1"/>
</dbReference>
<dbReference type="SUPFAM" id="SSF69593">
    <property type="entry name" value="Glycerol-3-phosphate (1)-acyltransferase"/>
    <property type="match status" value="1"/>
</dbReference>
<dbReference type="PROSITE" id="PS00455">
    <property type="entry name" value="AMP_BINDING"/>
    <property type="match status" value="1"/>
</dbReference>
<reference key="1">
    <citation type="journal article" date="2002" name="Proc. Natl. Acad. Sci. U.S.A.">
        <title>Extensive mosaic structure revealed by the complete genome sequence of uropathogenic Escherichia coli.</title>
        <authorList>
            <person name="Welch R.A."/>
            <person name="Burland V."/>
            <person name="Plunkett G. III"/>
            <person name="Redford P."/>
            <person name="Roesch P."/>
            <person name="Rasko D."/>
            <person name="Buckles E.L."/>
            <person name="Liou S.-R."/>
            <person name="Boutin A."/>
            <person name="Hackett J."/>
            <person name="Stroud D."/>
            <person name="Mayhew G.F."/>
            <person name="Rose D.J."/>
            <person name="Zhou S."/>
            <person name="Schwartz D.C."/>
            <person name="Perna N.T."/>
            <person name="Mobley H.L.T."/>
            <person name="Donnenberg M.S."/>
            <person name="Blattner F.R."/>
        </authorList>
    </citation>
    <scope>NUCLEOTIDE SEQUENCE [LARGE SCALE GENOMIC DNA]</scope>
    <source>
        <strain>CFT073 / ATCC 700928 / UPEC</strain>
    </source>
</reference>
<feature type="chain" id="PRO_0000193048" description="Bifunctional protein Aas">
    <location>
        <begin position="1"/>
        <end position="719"/>
    </location>
</feature>
<feature type="transmembrane region" description="Helical" evidence="1">
    <location>
        <begin position="258"/>
        <end position="277"/>
    </location>
</feature>
<feature type="transmembrane region" description="Helical" evidence="1">
    <location>
        <begin position="409"/>
        <end position="433"/>
    </location>
</feature>
<feature type="region of interest" description="Acyltransferase">
    <location>
        <begin position="15"/>
        <end position="138"/>
    </location>
</feature>
<feature type="region of interest" description="AMP-binding">
    <location>
        <begin position="233"/>
        <end position="646"/>
    </location>
</feature>
<feature type="active site" evidence="1">
    <location>
        <position position="36"/>
    </location>
</feature>
<protein>
    <recommendedName>
        <fullName evidence="1">Bifunctional protein Aas</fullName>
    </recommendedName>
    <domain>
        <recommendedName>
            <fullName evidence="1">2-acylglycerophosphoethanolamine acyltransferase</fullName>
            <ecNumber evidence="1">2.3.1.40</ecNumber>
        </recommendedName>
        <alternativeName>
            <fullName evidence="1">2-acyl-GPE acyltransferase</fullName>
        </alternativeName>
        <alternativeName>
            <fullName evidence="1">Acyl-[acyl-carrier-protein]--phospholipid O-acyltransferase</fullName>
        </alternativeName>
    </domain>
    <domain>
        <recommendedName>
            <fullName evidence="1">Acyl-[acyl-carrier-protein] synthetase</fullName>
            <ecNumber evidence="1">6.2.1.20</ecNumber>
        </recommendedName>
        <alternativeName>
            <fullName evidence="1">Acyl-ACP synthetase</fullName>
        </alternativeName>
        <alternativeName>
            <fullName evidence="1">Long-chain-fatty-acid--[acyl-carrier-protein] ligase</fullName>
        </alternativeName>
    </domain>
</protein>
<proteinExistence type="inferred from homology"/>
<comment type="function">
    <text evidence="1">Plays a role in lysophospholipid acylation. Transfers fatty acids to the 1-position via an enzyme-bound acyl-ACP intermediate in the presence of ATP and magnesium. Its physiological function is to regenerate phosphatidylethanolamine from 2-acyl-glycero-3-phosphoethanolamine (2-acyl-GPE) formed by transacylation reactions or degradation by phospholipase A1.</text>
</comment>
<comment type="catalytic activity">
    <reaction evidence="1">
        <text>a 2-acyl-sn-glycero-3-phosphoethanolamine + a fatty acyl-[ACP] = a 1,2-diacyl-sn-glycero-3-phosphoethanolamine + holo-[ACP]</text>
        <dbReference type="Rhea" id="RHEA:10304"/>
        <dbReference type="Rhea" id="RHEA-COMP:9685"/>
        <dbReference type="Rhea" id="RHEA-COMP:14125"/>
        <dbReference type="ChEBI" id="CHEBI:64479"/>
        <dbReference type="ChEBI" id="CHEBI:64612"/>
        <dbReference type="ChEBI" id="CHEBI:65213"/>
        <dbReference type="ChEBI" id="CHEBI:138651"/>
        <dbReference type="EC" id="2.3.1.40"/>
    </reaction>
</comment>
<comment type="catalytic activity">
    <reaction evidence="1">
        <text>a long-chain fatty acid + holo-[ACP] + ATP = a long-chain fatty acyl-[ACP] + AMP + diphosphate</text>
        <dbReference type="Rhea" id="RHEA:45588"/>
        <dbReference type="Rhea" id="RHEA-COMP:9685"/>
        <dbReference type="Rhea" id="RHEA-COMP:12682"/>
        <dbReference type="ChEBI" id="CHEBI:30616"/>
        <dbReference type="ChEBI" id="CHEBI:33019"/>
        <dbReference type="ChEBI" id="CHEBI:57560"/>
        <dbReference type="ChEBI" id="CHEBI:64479"/>
        <dbReference type="ChEBI" id="CHEBI:133243"/>
        <dbReference type="ChEBI" id="CHEBI:456215"/>
        <dbReference type="EC" id="6.2.1.20"/>
    </reaction>
</comment>
<comment type="subcellular location">
    <subcellularLocation>
        <location evidence="1">Cell inner membrane</location>
        <topology evidence="1">Multi-pass membrane protein</topology>
    </subcellularLocation>
</comment>
<comment type="similarity">
    <text evidence="1">In the N-terminal section; belongs to the 2-acyl-GPE acetyltransferase family.</text>
</comment>
<comment type="similarity">
    <text evidence="1">In the C-terminal section; belongs to the ATP-dependent AMP-binding enzyme family.</text>
</comment>
<gene>
    <name evidence="1" type="primary">aas</name>
    <name type="ordered locus">c3431</name>
</gene>
<sequence>MLFSFFRNLCRVLYRVRVTGDTKALKGERVLITPNHVSFIDGILLALFLPVRPVFAVYTSISQQWYMRWLKSFIDFVPLDPTQPMAIKHLVRLVEQGRPVVIFPEGRITTTGSLMKIYDGAGFVAAKSGATVIPVRIEGAELTHFSRLKGLVKRRLFPQITLHILPPTQVEMPDAPRARDRRKIAGEMLHQIMMEARMAVRPRETLYESLLSAMYRFGAGKKCVEDVNFTPDSYRKLLTKTLFVGRILEKYSVEGERIGLMLPNAGISAAVIFGAIARRRIPAMMNYTAGVKGLTSAITAAEIKTIFTSRQFLDKGKLWHLPEQLTQVRWVYLEDLKADVTTADKVWIFAHLLMPRLAQLKQQPEEEALILFTSGSEGHPKGVVHSHKSILANVEQIKTIADFTTNDRFMSALPLFHSFGLTVGLFTPLLTGAEVFLYPSPLHYRIVPELVYDRSCTVLFGTSTFLGHYARFANPYDFYRLRYVVAGAEKLQESTKQLWQDKFGLRILEGYGVTECAPVVSINVPMAAKPGTVGRILPGMDARLLSVPGIEEGGRLQLKGPNIMNGYLRVEKPGVLEVPTAENVRGEMERGWYDTGDIVRFDEQGFVQIQGRAKRFAKIAGEMVSLEMVEQLALGVSPDKVHATAIKSDASKGEALVLFTTDNELTRDKLQQYAREHGVPELAVPRDIRYLKQMPLLGSGKPDFVTLKSWVDEAEQHDE</sequence>
<evidence type="ECO:0000255" key="1">
    <source>
        <dbReference type="HAMAP-Rule" id="MF_01162"/>
    </source>
</evidence>
<accession>Q8FEA6</accession>
<organism>
    <name type="scientific">Escherichia coli O6:H1 (strain CFT073 / ATCC 700928 / UPEC)</name>
    <dbReference type="NCBI Taxonomy" id="199310"/>
    <lineage>
        <taxon>Bacteria</taxon>
        <taxon>Pseudomonadati</taxon>
        <taxon>Pseudomonadota</taxon>
        <taxon>Gammaproteobacteria</taxon>
        <taxon>Enterobacterales</taxon>
        <taxon>Enterobacteriaceae</taxon>
        <taxon>Escherichia</taxon>
    </lineage>
</organism>
<keyword id="KW-0012">Acyltransferase</keyword>
<keyword id="KW-0067">ATP-binding</keyword>
<keyword id="KW-0997">Cell inner membrane</keyword>
<keyword id="KW-1003">Cell membrane</keyword>
<keyword id="KW-0436">Ligase</keyword>
<keyword id="KW-0472">Membrane</keyword>
<keyword id="KW-0511">Multifunctional enzyme</keyword>
<keyword id="KW-0547">Nucleotide-binding</keyword>
<keyword id="KW-1185">Reference proteome</keyword>
<keyword id="KW-0808">Transferase</keyword>
<keyword id="KW-0812">Transmembrane</keyword>
<keyword id="KW-1133">Transmembrane helix</keyword>
<name>AAS_ECOL6</name>